<protein>
    <recommendedName>
        <fullName evidence="1">tRNA-specific 2-thiouridylase MnmA</fullName>
        <ecNumber evidence="1">2.8.1.13</ecNumber>
    </recommendedName>
</protein>
<keyword id="KW-0067">ATP-binding</keyword>
<keyword id="KW-0963">Cytoplasm</keyword>
<keyword id="KW-1015">Disulfide bond</keyword>
<keyword id="KW-0547">Nucleotide-binding</keyword>
<keyword id="KW-1185">Reference proteome</keyword>
<keyword id="KW-0694">RNA-binding</keyword>
<keyword id="KW-0808">Transferase</keyword>
<keyword id="KW-0819">tRNA processing</keyword>
<keyword id="KW-0820">tRNA-binding</keyword>
<reference key="1">
    <citation type="journal article" date="2014" name="Stand. Genomic Sci.">
        <title>Complete genome sequence of Burkholderia phymatum STM815(T), a broad host range and efficient nitrogen-fixing symbiont of Mimosa species.</title>
        <authorList>
            <person name="Moulin L."/>
            <person name="Klonowska A."/>
            <person name="Caroline B."/>
            <person name="Booth K."/>
            <person name="Vriezen J.A."/>
            <person name="Melkonian R."/>
            <person name="James E.K."/>
            <person name="Young J.P."/>
            <person name="Bena G."/>
            <person name="Hauser L."/>
            <person name="Land M."/>
            <person name="Kyrpides N."/>
            <person name="Bruce D."/>
            <person name="Chain P."/>
            <person name="Copeland A."/>
            <person name="Pitluck S."/>
            <person name="Woyke T."/>
            <person name="Lizotte-Waniewski M."/>
            <person name="Bristow J."/>
            <person name="Riley M."/>
        </authorList>
    </citation>
    <scope>NUCLEOTIDE SEQUENCE [LARGE SCALE GENOMIC DNA]</scope>
    <source>
        <strain>DSM 17167 / CIP 108236 / LMG 21445 / STM815</strain>
    </source>
</reference>
<proteinExistence type="inferred from homology"/>
<evidence type="ECO:0000255" key="1">
    <source>
        <dbReference type="HAMAP-Rule" id="MF_00144"/>
    </source>
</evidence>
<feature type="chain" id="PRO_0000349558" description="tRNA-specific 2-thiouridylase MnmA">
    <location>
        <begin position="1"/>
        <end position="384"/>
    </location>
</feature>
<feature type="region of interest" description="Interaction with target base in tRNA" evidence="1">
    <location>
        <begin position="95"/>
        <end position="97"/>
    </location>
</feature>
<feature type="region of interest" description="Interaction with tRNA" evidence="1">
    <location>
        <begin position="146"/>
        <end position="148"/>
    </location>
</feature>
<feature type="region of interest" description="Interaction with tRNA" evidence="1">
    <location>
        <begin position="308"/>
        <end position="309"/>
    </location>
</feature>
<feature type="active site" description="Nucleophile" evidence="1">
    <location>
        <position position="100"/>
    </location>
</feature>
<feature type="active site" description="Cysteine persulfide intermediate" evidence="1">
    <location>
        <position position="196"/>
    </location>
</feature>
<feature type="binding site" evidence="1">
    <location>
        <begin position="9"/>
        <end position="16"/>
    </location>
    <ligand>
        <name>ATP</name>
        <dbReference type="ChEBI" id="CHEBI:30616"/>
    </ligand>
</feature>
<feature type="binding site" evidence="1">
    <location>
        <position position="35"/>
    </location>
    <ligand>
        <name>ATP</name>
        <dbReference type="ChEBI" id="CHEBI:30616"/>
    </ligand>
</feature>
<feature type="binding site" evidence="1">
    <location>
        <position position="124"/>
    </location>
    <ligand>
        <name>ATP</name>
        <dbReference type="ChEBI" id="CHEBI:30616"/>
    </ligand>
</feature>
<feature type="site" description="Interaction with tRNA" evidence="1">
    <location>
        <position position="125"/>
    </location>
</feature>
<feature type="site" description="Interaction with tRNA" evidence="1">
    <location>
        <position position="346"/>
    </location>
</feature>
<feature type="disulfide bond" description="Alternate" evidence="1">
    <location>
        <begin position="100"/>
        <end position="196"/>
    </location>
</feature>
<sequence length="384" mass="41930">MSKQRVVVGMSGGVDSSVTAWLLKEQGYDVVGLFMKNWEDDDDSEYCSTRQDWIDVVSVADLIGIDVEAVNFAAEYKDRVFAEFLREYSAGRTPNPDVLCNAEIKFKAFLDHAMSLGAETIATGHYARVREIDGRFELLKARDHTKDQSYFLHRLNQAQLSKTLFPLGDIPKTKVREIAEQIGLPNAKKKDSTGICFIGERPFRDFLNRYLPTRPGPMKTTDGKTVGEHIGLAFYTFGQRKGIGLGGSKDGSGEPWFVAGKDIESNTLYVAQGHDHPWLLSRTLTAGNTSWVAGHAPEVGHACAAKTRYRQADAACTFGAAGANADPNALFSLHFADAQWAVTPGQSAVLYDGDVCLGGGIIEHAATAQPVTRQPQKAALLTAR</sequence>
<name>MNMA_PARP8</name>
<accession>B2JGI9</accession>
<gene>
    <name evidence="1" type="primary">mnmA</name>
    <name type="ordered locus">Bphy_2545</name>
</gene>
<organism>
    <name type="scientific">Paraburkholderia phymatum (strain DSM 17167 / CIP 108236 / LMG 21445 / STM815)</name>
    <name type="common">Burkholderia phymatum</name>
    <dbReference type="NCBI Taxonomy" id="391038"/>
    <lineage>
        <taxon>Bacteria</taxon>
        <taxon>Pseudomonadati</taxon>
        <taxon>Pseudomonadota</taxon>
        <taxon>Betaproteobacteria</taxon>
        <taxon>Burkholderiales</taxon>
        <taxon>Burkholderiaceae</taxon>
        <taxon>Paraburkholderia</taxon>
    </lineage>
</organism>
<comment type="function">
    <text evidence="1">Catalyzes the 2-thiolation of uridine at the wobble position (U34) of tRNA, leading to the formation of s(2)U34.</text>
</comment>
<comment type="catalytic activity">
    <reaction evidence="1">
        <text>S-sulfanyl-L-cysteinyl-[protein] + uridine(34) in tRNA + AH2 + ATP = 2-thiouridine(34) in tRNA + L-cysteinyl-[protein] + A + AMP + diphosphate + H(+)</text>
        <dbReference type="Rhea" id="RHEA:47032"/>
        <dbReference type="Rhea" id="RHEA-COMP:10131"/>
        <dbReference type="Rhea" id="RHEA-COMP:11726"/>
        <dbReference type="Rhea" id="RHEA-COMP:11727"/>
        <dbReference type="Rhea" id="RHEA-COMP:11728"/>
        <dbReference type="ChEBI" id="CHEBI:13193"/>
        <dbReference type="ChEBI" id="CHEBI:15378"/>
        <dbReference type="ChEBI" id="CHEBI:17499"/>
        <dbReference type="ChEBI" id="CHEBI:29950"/>
        <dbReference type="ChEBI" id="CHEBI:30616"/>
        <dbReference type="ChEBI" id="CHEBI:33019"/>
        <dbReference type="ChEBI" id="CHEBI:61963"/>
        <dbReference type="ChEBI" id="CHEBI:65315"/>
        <dbReference type="ChEBI" id="CHEBI:87170"/>
        <dbReference type="ChEBI" id="CHEBI:456215"/>
        <dbReference type="EC" id="2.8.1.13"/>
    </reaction>
</comment>
<comment type="subcellular location">
    <subcellularLocation>
        <location evidence="1">Cytoplasm</location>
    </subcellularLocation>
</comment>
<comment type="similarity">
    <text evidence="1">Belongs to the MnmA/TRMU family.</text>
</comment>
<dbReference type="EC" id="2.8.1.13" evidence="1"/>
<dbReference type="EMBL" id="CP001043">
    <property type="protein sequence ID" value="ACC71717.1"/>
    <property type="molecule type" value="Genomic_DNA"/>
</dbReference>
<dbReference type="RefSeq" id="WP_012401921.1">
    <property type="nucleotide sequence ID" value="NC_010622.1"/>
</dbReference>
<dbReference type="SMR" id="B2JGI9"/>
<dbReference type="STRING" id="391038.Bphy_2545"/>
<dbReference type="KEGG" id="bph:Bphy_2545"/>
<dbReference type="eggNOG" id="COG0482">
    <property type="taxonomic scope" value="Bacteria"/>
</dbReference>
<dbReference type="HOGENOM" id="CLU_035188_1_0_4"/>
<dbReference type="OrthoDB" id="9800696at2"/>
<dbReference type="Proteomes" id="UP000001192">
    <property type="component" value="Chromosome 1"/>
</dbReference>
<dbReference type="GO" id="GO:0005737">
    <property type="term" value="C:cytoplasm"/>
    <property type="evidence" value="ECO:0007669"/>
    <property type="project" value="UniProtKB-SubCell"/>
</dbReference>
<dbReference type="GO" id="GO:0005524">
    <property type="term" value="F:ATP binding"/>
    <property type="evidence" value="ECO:0007669"/>
    <property type="project" value="UniProtKB-KW"/>
</dbReference>
<dbReference type="GO" id="GO:0000049">
    <property type="term" value="F:tRNA binding"/>
    <property type="evidence" value="ECO:0007669"/>
    <property type="project" value="UniProtKB-KW"/>
</dbReference>
<dbReference type="GO" id="GO:0103016">
    <property type="term" value="F:tRNA-uridine 2-sulfurtransferase activity"/>
    <property type="evidence" value="ECO:0007669"/>
    <property type="project" value="UniProtKB-EC"/>
</dbReference>
<dbReference type="GO" id="GO:0002143">
    <property type="term" value="P:tRNA wobble position uridine thiolation"/>
    <property type="evidence" value="ECO:0007669"/>
    <property type="project" value="TreeGrafter"/>
</dbReference>
<dbReference type="CDD" id="cd01998">
    <property type="entry name" value="MnmA_TRMU-like"/>
    <property type="match status" value="1"/>
</dbReference>
<dbReference type="FunFam" id="2.30.30.280:FF:000001">
    <property type="entry name" value="tRNA-specific 2-thiouridylase MnmA"/>
    <property type="match status" value="1"/>
</dbReference>
<dbReference type="FunFam" id="2.40.30.10:FF:000023">
    <property type="entry name" value="tRNA-specific 2-thiouridylase MnmA"/>
    <property type="match status" value="1"/>
</dbReference>
<dbReference type="FunFam" id="3.40.50.620:FF:000004">
    <property type="entry name" value="tRNA-specific 2-thiouridylase MnmA"/>
    <property type="match status" value="1"/>
</dbReference>
<dbReference type="Gene3D" id="2.30.30.280">
    <property type="entry name" value="Adenine nucleotide alpha hydrolases-like domains"/>
    <property type="match status" value="1"/>
</dbReference>
<dbReference type="Gene3D" id="3.40.50.620">
    <property type="entry name" value="HUPs"/>
    <property type="match status" value="1"/>
</dbReference>
<dbReference type="Gene3D" id="2.40.30.10">
    <property type="entry name" value="Translation factors"/>
    <property type="match status" value="1"/>
</dbReference>
<dbReference type="HAMAP" id="MF_00144">
    <property type="entry name" value="tRNA_thiouridyl_MnmA"/>
    <property type="match status" value="1"/>
</dbReference>
<dbReference type="InterPro" id="IPR004506">
    <property type="entry name" value="MnmA-like"/>
</dbReference>
<dbReference type="InterPro" id="IPR046885">
    <property type="entry name" value="MnmA-like_C"/>
</dbReference>
<dbReference type="InterPro" id="IPR046884">
    <property type="entry name" value="MnmA-like_central"/>
</dbReference>
<dbReference type="InterPro" id="IPR023382">
    <property type="entry name" value="MnmA-like_central_sf"/>
</dbReference>
<dbReference type="InterPro" id="IPR014729">
    <property type="entry name" value="Rossmann-like_a/b/a_fold"/>
</dbReference>
<dbReference type="NCBIfam" id="NF001138">
    <property type="entry name" value="PRK00143.1"/>
    <property type="match status" value="1"/>
</dbReference>
<dbReference type="NCBIfam" id="TIGR00420">
    <property type="entry name" value="trmU"/>
    <property type="match status" value="1"/>
</dbReference>
<dbReference type="PANTHER" id="PTHR11933:SF5">
    <property type="entry name" value="MITOCHONDRIAL TRNA-SPECIFIC 2-THIOURIDYLASE 1"/>
    <property type="match status" value="1"/>
</dbReference>
<dbReference type="PANTHER" id="PTHR11933">
    <property type="entry name" value="TRNA 5-METHYLAMINOMETHYL-2-THIOURIDYLATE -METHYLTRANSFERASE"/>
    <property type="match status" value="1"/>
</dbReference>
<dbReference type="Pfam" id="PF03054">
    <property type="entry name" value="tRNA_Me_trans"/>
    <property type="match status" value="1"/>
</dbReference>
<dbReference type="Pfam" id="PF20258">
    <property type="entry name" value="tRNA_Me_trans_C"/>
    <property type="match status" value="1"/>
</dbReference>
<dbReference type="Pfam" id="PF20259">
    <property type="entry name" value="tRNA_Me_trans_M"/>
    <property type="match status" value="1"/>
</dbReference>
<dbReference type="SUPFAM" id="SSF52402">
    <property type="entry name" value="Adenine nucleotide alpha hydrolases-like"/>
    <property type="match status" value="1"/>
</dbReference>